<organism>
    <name type="scientific">Escherichia coli</name>
    <dbReference type="NCBI Taxonomy" id="562"/>
    <lineage>
        <taxon>Bacteria</taxon>
        <taxon>Pseudomonadati</taxon>
        <taxon>Pseudomonadota</taxon>
        <taxon>Gammaproteobacteria</taxon>
        <taxon>Enterobacterales</taxon>
        <taxon>Enterobacteriaceae</taxon>
        <taxon>Escherichia</taxon>
    </lineage>
</organism>
<comment type="function">
    <text>This protein is able to protect a cell, which harbors the plasmid ColE9 encoding colicin E9, against colicin E9, it binds specifically to the DNase-type colicin and inhibits its bactericidal activity.</text>
</comment>
<comment type="interaction">
    <interactant intactId="EBI-1029882">
        <id>P13479</id>
    </interactant>
    <interactant intactId="EBI-1029888">
        <id>P09883</id>
        <label>col</label>
    </interactant>
    <organismsDiffer>false</organismsDiffer>
    <experiments>4</experiments>
</comment>
<comment type="interaction">
    <interactant intactId="EBI-1029882">
        <id>P13479</id>
    </interactant>
    <interactant intactId="EBI-1035016">
        <id>Q47112</id>
        <label>colE7</label>
    </interactant>
    <organismsDiffer>false</organismsDiffer>
    <experiments>3</experiments>
</comment>
<comment type="similarity">
    <text evidence="1">Belongs to the colicins ColE2/ColE8/ColE9 and pyocins S1/S2 family.</text>
</comment>
<dbReference type="EMBL" id="X15858">
    <property type="protein sequence ID" value="CAA33863.1"/>
    <property type="molecule type" value="Genomic_DNA"/>
</dbReference>
<dbReference type="EMBL" id="M16803">
    <property type="protein sequence ID" value="AAA23076.1"/>
    <property type="molecule type" value="Genomic_DNA"/>
</dbReference>
<dbReference type="PIR" id="A32535">
    <property type="entry name" value="A32535"/>
</dbReference>
<dbReference type="RefSeq" id="WP_012644887.1">
    <property type="nucleotide sequence ID" value="NC_011977.1"/>
</dbReference>
<dbReference type="RefSeq" id="YP_002533538.1">
    <property type="nucleotide sequence ID" value="NC_011977.1"/>
</dbReference>
<dbReference type="PDB" id="1BXI">
    <property type="method" value="X-ray"/>
    <property type="resolution" value="2.05 A"/>
    <property type="chains" value="A=1-86"/>
</dbReference>
<dbReference type="PDB" id="1E0H">
    <property type="method" value="NMR"/>
    <property type="chains" value="A=1-86"/>
</dbReference>
<dbReference type="PDB" id="1EMV">
    <property type="method" value="X-ray"/>
    <property type="resolution" value="1.70 A"/>
    <property type="chains" value="A=1-86"/>
</dbReference>
<dbReference type="PDB" id="1FR2">
    <property type="method" value="X-ray"/>
    <property type="resolution" value="1.60 A"/>
    <property type="chains" value="A=1-86"/>
</dbReference>
<dbReference type="PDB" id="1IMP">
    <property type="method" value="NMR"/>
    <property type="chains" value="A=1-86"/>
</dbReference>
<dbReference type="PDB" id="1IMQ">
    <property type="method" value="NMR"/>
    <property type="chains" value="A=1-86"/>
</dbReference>
<dbReference type="PDB" id="2GYK">
    <property type="method" value="X-ray"/>
    <property type="resolution" value="1.60 A"/>
    <property type="chains" value="A/E=1-86"/>
</dbReference>
<dbReference type="PDB" id="2GZE">
    <property type="method" value="X-ray"/>
    <property type="resolution" value="1.80 A"/>
    <property type="chains" value="A=1-86"/>
</dbReference>
<dbReference type="PDB" id="2GZF">
    <property type="method" value="X-ray"/>
    <property type="resolution" value="1.75 A"/>
    <property type="chains" value="A=1-86"/>
</dbReference>
<dbReference type="PDB" id="2GZG">
    <property type="method" value="X-ray"/>
    <property type="resolution" value="1.70 A"/>
    <property type="chains" value="A=1-86"/>
</dbReference>
<dbReference type="PDB" id="2GZI">
    <property type="method" value="X-ray"/>
    <property type="resolution" value="1.70 A"/>
    <property type="chains" value="A=1-86"/>
</dbReference>
<dbReference type="PDB" id="2GZJ">
    <property type="method" value="X-ray"/>
    <property type="resolution" value="1.60 A"/>
    <property type="chains" value="A/E=1-86"/>
</dbReference>
<dbReference type="PDB" id="2K5X">
    <property type="method" value="NMR"/>
    <property type="chains" value="A=1-86"/>
</dbReference>
<dbReference type="PDB" id="2VLN">
    <property type="method" value="X-ray"/>
    <property type="resolution" value="1.60 A"/>
    <property type="chains" value="A=1-86"/>
</dbReference>
<dbReference type="PDB" id="2VLO">
    <property type="method" value="X-ray"/>
    <property type="resolution" value="1.80 A"/>
    <property type="chains" value="A=1-86"/>
</dbReference>
<dbReference type="PDB" id="2VLP">
    <property type="method" value="X-ray"/>
    <property type="resolution" value="2.00 A"/>
    <property type="chains" value="A=1-86"/>
</dbReference>
<dbReference type="PDB" id="2VLQ">
    <property type="method" value="X-ray"/>
    <property type="resolution" value="1.60 A"/>
    <property type="chains" value="A=1-86"/>
</dbReference>
<dbReference type="PDB" id="3GJN">
    <property type="method" value="X-ray"/>
    <property type="resolution" value="2.48 A"/>
    <property type="chains" value="A/D=1-86"/>
</dbReference>
<dbReference type="PDB" id="3GKL">
    <property type="method" value="X-ray"/>
    <property type="resolution" value="2.20 A"/>
    <property type="chains" value="C/D=1-86"/>
</dbReference>
<dbReference type="PDB" id="5EW5">
    <property type="method" value="X-ray"/>
    <property type="resolution" value="3.20 A"/>
    <property type="chains" value="E/F/G/H=1-86"/>
</dbReference>
<dbReference type="PDBsum" id="1BXI"/>
<dbReference type="PDBsum" id="1E0H"/>
<dbReference type="PDBsum" id="1EMV"/>
<dbReference type="PDBsum" id="1FR2"/>
<dbReference type="PDBsum" id="1IMP"/>
<dbReference type="PDBsum" id="1IMQ"/>
<dbReference type="PDBsum" id="2GYK"/>
<dbReference type="PDBsum" id="2GZE"/>
<dbReference type="PDBsum" id="2GZF"/>
<dbReference type="PDBsum" id="2GZG"/>
<dbReference type="PDBsum" id="2GZI"/>
<dbReference type="PDBsum" id="2GZJ"/>
<dbReference type="PDBsum" id="2K5X"/>
<dbReference type="PDBsum" id="2VLN"/>
<dbReference type="PDBsum" id="2VLO"/>
<dbReference type="PDBsum" id="2VLP"/>
<dbReference type="PDBsum" id="2VLQ"/>
<dbReference type="PDBsum" id="3GJN"/>
<dbReference type="PDBsum" id="3GKL"/>
<dbReference type="PDBsum" id="5EW5"/>
<dbReference type="BMRB" id="P13479"/>
<dbReference type="SMR" id="P13479"/>
<dbReference type="DIP" id="DIP-16991N"/>
<dbReference type="IntAct" id="P13479">
    <property type="interactions" value="2"/>
</dbReference>
<dbReference type="EvolutionaryTrace" id="P13479"/>
<dbReference type="GO" id="GO:0032991">
    <property type="term" value="C:protein-containing complex"/>
    <property type="evidence" value="ECO:0000314"/>
    <property type="project" value="CAFA"/>
</dbReference>
<dbReference type="GO" id="GO:0019904">
    <property type="term" value="F:protein domain specific binding"/>
    <property type="evidence" value="ECO:0000353"/>
    <property type="project" value="CAFA"/>
</dbReference>
<dbReference type="GO" id="GO:0015643">
    <property type="term" value="F:toxic substance binding"/>
    <property type="evidence" value="ECO:0007669"/>
    <property type="project" value="InterPro"/>
</dbReference>
<dbReference type="GO" id="GO:0030153">
    <property type="term" value="P:bacteriocin immunity"/>
    <property type="evidence" value="ECO:0007669"/>
    <property type="project" value="UniProtKB-KW"/>
</dbReference>
<dbReference type="CDD" id="cd16363">
    <property type="entry name" value="Col_Im_like"/>
    <property type="match status" value="1"/>
</dbReference>
<dbReference type="FunFam" id="1.10.1200.20:FF:000001">
    <property type="entry name" value="Colicin-E9 immunity protein"/>
    <property type="match status" value="1"/>
</dbReference>
<dbReference type="Gene3D" id="1.10.1200.20">
    <property type="entry name" value="Colicin E immunity protein"/>
    <property type="match status" value="1"/>
</dbReference>
<dbReference type="InterPro" id="IPR035900">
    <property type="entry name" value="Colicin_E_sf"/>
</dbReference>
<dbReference type="InterPro" id="IPR000290">
    <property type="entry name" value="Colicin_pyocin"/>
</dbReference>
<dbReference type="Pfam" id="PF01320">
    <property type="entry name" value="Colicin_Pyocin"/>
    <property type="match status" value="1"/>
</dbReference>
<dbReference type="PRINTS" id="PR01299">
    <property type="entry name" value="PYOCIN"/>
</dbReference>
<dbReference type="SUPFAM" id="SSF47345">
    <property type="entry name" value="Colicin E immunity proteins"/>
    <property type="match status" value="1"/>
</dbReference>
<gene>
    <name type="primary">imm</name>
    <name type="synonym">ceiE9</name>
</gene>
<evidence type="ECO:0000305" key="1"/>
<evidence type="ECO:0007829" key="2">
    <source>
        <dbReference type="PDB" id="1FR2"/>
    </source>
</evidence>
<sequence length="86" mass="9583">MELKHSISDYTEAEFLQLVTTICNADTSSEEELVKLVTHFEEMTEHPSGSDLIYYPKEGDDDSPSGIVNTVKQWRAANGKSGFKQG</sequence>
<keyword id="KW-0002">3D-structure</keyword>
<keyword id="KW-0079">Bacteriocin immunity</keyword>
<keyword id="KW-0614">Plasmid</keyword>
<protein>
    <recommendedName>
        <fullName>Colicin-E9 immunity protein</fullName>
    </recommendedName>
    <alternativeName>
        <fullName>ImmE9</fullName>
    </alternativeName>
    <alternativeName>
        <fullName>Microcin-E9 immunity protein</fullName>
    </alternativeName>
</protein>
<accession>P13479</accession>
<feature type="chain" id="PRO_0000218711" description="Colicin-E9 immunity protein">
    <location>
        <begin position="1"/>
        <end position="86"/>
    </location>
</feature>
<feature type="sequence conflict" description="In Ref. 3; AAA23076." evidence="1" ref="3">
    <original>D</original>
    <variation>N</variation>
    <location>
        <position position="26"/>
    </location>
</feature>
<feature type="helix" evidence="2">
    <location>
        <begin position="7"/>
        <end position="9"/>
    </location>
</feature>
<feature type="helix" evidence="2">
    <location>
        <begin position="12"/>
        <end position="23"/>
    </location>
</feature>
<feature type="strand" evidence="2">
    <location>
        <begin position="27"/>
        <end position="29"/>
    </location>
</feature>
<feature type="helix" evidence="2">
    <location>
        <begin position="30"/>
        <end position="44"/>
    </location>
</feature>
<feature type="turn" evidence="2">
    <location>
        <begin position="47"/>
        <end position="50"/>
    </location>
</feature>
<feature type="helix" evidence="2">
    <location>
        <begin position="51"/>
        <end position="54"/>
    </location>
</feature>
<feature type="helix" evidence="2">
    <location>
        <begin position="64"/>
        <end position="77"/>
    </location>
</feature>
<proteinExistence type="evidence at protein level"/>
<geneLocation type="plasmid">
    <name>ColE9-J</name>
</geneLocation>
<name>IMM9_ECOLX</name>
<reference key="1">
    <citation type="journal article" date="1989" name="Mol. Gen. Genet.">
        <title>Nucleotide sequences from the colicin E5, E6 and E9 operons: presence of a degenerate transposon-like structure in the ColE9-J plasmid.</title>
        <authorList>
            <person name="Lau P.C.K."/>
            <person name="Condie J.A."/>
        </authorList>
    </citation>
    <scope>NUCLEOTIDE SEQUENCE [GENOMIC DNA] OF 1-9</scope>
</reference>
<reference key="2">
    <citation type="submission" date="1989-12" db="EMBL/GenBank/DDBJ databases">
        <authorList>
            <person name="Lau P.C.K."/>
        </authorList>
    </citation>
    <scope>NUCLEOTIDE SEQUENCE [GENOMIC DNA]</scope>
</reference>
<reference key="3">
    <citation type="journal article" date="1987" name="J. Gen. Microbiol.">
        <title>Nucleotide sequence of the immunity and lysis region of the ColE9-J plasmid.</title>
        <authorList>
            <person name="James R."/>
            <person name="Jarvis M."/>
            <person name="Barker D.F."/>
        </authorList>
    </citation>
    <scope>NUCLEOTIDE SEQUENCE [GENOMIC DNA]</scope>
</reference>
<reference key="4">
    <citation type="journal article" date="1996" name="Biochemistry">
        <title>Three-dimensional solution structure and 13C nuclear magnetic resonance assignments of the colicin E9 immunity protein Im9.</title>
        <authorList>
            <person name="Osborne M.J."/>
            <person name="Breeze A.L."/>
            <person name="Lian L.Y."/>
            <person name="Reilly A."/>
            <person name="James R."/>
            <person name="Kleanthous C."/>
            <person name="Moore G.R."/>
        </authorList>
    </citation>
    <scope>STRUCTURE BY NMR</scope>
</reference>